<dbReference type="EC" id="3.5.4.16" evidence="1"/>
<dbReference type="EMBL" id="BX640419">
    <property type="protein sequence ID" value="CAE43070.1"/>
    <property type="molecule type" value="Genomic_DNA"/>
</dbReference>
<dbReference type="RefSeq" id="NP_881397.1">
    <property type="nucleotide sequence ID" value="NC_002929.2"/>
</dbReference>
<dbReference type="RefSeq" id="WP_003813103.1">
    <property type="nucleotide sequence ID" value="NZ_CP039022.1"/>
</dbReference>
<dbReference type="SMR" id="Q7VV88"/>
<dbReference type="STRING" id="257313.BP2797"/>
<dbReference type="PaxDb" id="257313-BP2797"/>
<dbReference type="GeneID" id="93204249"/>
<dbReference type="KEGG" id="bpe:BP2797"/>
<dbReference type="PATRIC" id="fig|257313.5.peg.3017"/>
<dbReference type="eggNOG" id="COG1469">
    <property type="taxonomic scope" value="Bacteria"/>
</dbReference>
<dbReference type="HOGENOM" id="CLU_062816_1_1_4"/>
<dbReference type="UniPathway" id="UPA00848">
    <property type="reaction ID" value="UER00151"/>
</dbReference>
<dbReference type="Proteomes" id="UP000002676">
    <property type="component" value="Chromosome"/>
</dbReference>
<dbReference type="GO" id="GO:0003934">
    <property type="term" value="F:GTP cyclohydrolase I activity"/>
    <property type="evidence" value="ECO:0007669"/>
    <property type="project" value="UniProtKB-UniRule"/>
</dbReference>
<dbReference type="GO" id="GO:0046654">
    <property type="term" value="P:tetrahydrofolate biosynthetic process"/>
    <property type="evidence" value="ECO:0007669"/>
    <property type="project" value="UniProtKB-UniRule"/>
</dbReference>
<dbReference type="Gene3D" id="3.10.270.10">
    <property type="entry name" value="Urate Oxidase"/>
    <property type="match status" value="1"/>
</dbReference>
<dbReference type="HAMAP" id="MF_01527_B">
    <property type="entry name" value="GTP_cyclohydrol_B"/>
    <property type="match status" value="1"/>
</dbReference>
<dbReference type="InterPro" id="IPR022838">
    <property type="entry name" value="GTP_cyclohydrolase_FolE2"/>
</dbReference>
<dbReference type="InterPro" id="IPR003801">
    <property type="entry name" value="GTP_cyclohydrolase_FolE2/MptA"/>
</dbReference>
<dbReference type="NCBIfam" id="NF010200">
    <property type="entry name" value="PRK13674.1-1"/>
    <property type="match status" value="1"/>
</dbReference>
<dbReference type="PANTHER" id="PTHR36445">
    <property type="entry name" value="GTP CYCLOHYDROLASE MPTA"/>
    <property type="match status" value="1"/>
</dbReference>
<dbReference type="PANTHER" id="PTHR36445:SF1">
    <property type="entry name" value="GTP CYCLOHYDROLASE MPTA"/>
    <property type="match status" value="1"/>
</dbReference>
<dbReference type="Pfam" id="PF02649">
    <property type="entry name" value="GCHY-1"/>
    <property type="match status" value="1"/>
</dbReference>
<reference key="1">
    <citation type="journal article" date="2003" name="Nat. Genet.">
        <title>Comparative analysis of the genome sequences of Bordetella pertussis, Bordetella parapertussis and Bordetella bronchiseptica.</title>
        <authorList>
            <person name="Parkhill J."/>
            <person name="Sebaihia M."/>
            <person name="Preston A."/>
            <person name="Murphy L.D."/>
            <person name="Thomson N.R."/>
            <person name="Harris D.E."/>
            <person name="Holden M.T.G."/>
            <person name="Churcher C.M."/>
            <person name="Bentley S.D."/>
            <person name="Mungall K.L."/>
            <person name="Cerdeno-Tarraga A.-M."/>
            <person name="Temple L."/>
            <person name="James K.D."/>
            <person name="Harris B."/>
            <person name="Quail M.A."/>
            <person name="Achtman M."/>
            <person name="Atkin R."/>
            <person name="Baker S."/>
            <person name="Basham D."/>
            <person name="Bason N."/>
            <person name="Cherevach I."/>
            <person name="Chillingworth T."/>
            <person name="Collins M."/>
            <person name="Cronin A."/>
            <person name="Davis P."/>
            <person name="Doggett J."/>
            <person name="Feltwell T."/>
            <person name="Goble A."/>
            <person name="Hamlin N."/>
            <person name="Hauser H."/>
            <person name="Holroyd S."/>
            <person name="Jagels K."/>
            <person name="Leather S."/>
            <person name="Moule S."/>
            <person name="Norberczak H."/>
            <person name="O'Neil S."/>
            <person name="Ormond D."/>
            <person name="Price C."/>
            <person name="Rabbinowitsch E."/>
            <person name="Rutter S."/>
            <person name="Sanders M."/>
            <person name="Saunders D."/>
            <person name="Seeger K."/>
            <person name="Sharp S."/>
            <person name="Simmonds M."/>
            <person name="Skelton J."/>
            <person name="Squares R."/>
            <person name="Squares S."/>
            <person name="Stevens K."/>
            <person name="Unwin L."/>
            <person name="Whitehead S."/>
            <person name="Barrell B.G."/>
            <person name="Maskell D.J."/>
        </authorList>
    </citation>
    <scope>NUCLEOTIDE SEQUENCE [LARGE SCALE GENOMIC DNA]</scope>
    <source>
        <strain>Tohama I / ATCC BAA-589 / NCTC 13251</strain>
    </source>
</reference>
<comment type="function">
    <text evidence="1">Converts GTP to 7,8-dihydroneopterin triphosphate.</text>
</comment>
<comment type="catalytic activity">
    <reaction evidence="1">
        <text>GTP + H2O = 7,8-dihydroneopterin 3'-triphosphate + formate + H(+)</text>
        <dbReference type="Rhea" id="RHEA:17473"/>
        <dbReference type="ChEBI" id="CHEBI:15377"/>
        <dbReference type="ChEBI" id="CHEBI:15378"/>
        <dbReference type="ChEBI" id="CHEBI:15740"/>
        <dbReference type="ChEBI" id="CHEBI:37565"/>
        <dbReference type="ChEBI" id="CHEBI:58462"/>
        <dbReference type="EC" id="3.5.4.16"/>
    </reaction>
</comment>
<comment type="pathway">
    <text evidence="1">Cofactor biosynthesis; 7,8-dihydroneopterin triphosphate biosynthesis; 7,8-dihydroneopterin triphosphate from GTP: step 1/1.</text>
</comment>
<comment type="similarity">
    <text evidence="1">Belongs to the GTP cyclohydrolase IV family.</text>
</comment>
<organism>
    <name type="scientific">Bordetella pertussis (strain Tohama I / ATCC BAA-589 / NCTC 13251)</name>
    <dbReference type="NCBI Taxonomy" id="257313"/>
    <lineage>
        <taxon>Bacteria</taxon>
        <taxon>Pseudomonadati</taxon>
        <taxon>Pseudomonadota</taxon>
        <taxon>Betaproteobacteria</taxon>
        <taxon>Burkholderiales</taxon>
        <taxon>Alcaligenaceae</taxon>
        <taxon>Bordetella</taxon>
    </lineage>
</organism>
<name>GCH4_BORPE</name>
<proteinExistence type="inferred from homology"/>
<accession>Q7VV88</accession>
<sequence>MNSPIDPAIVMPDVQSSTDTRHIPIQRVGIRGVRHPMLVLAGDGAAQPTVANWTLTVALPAEEKGTHMSRFVALLEKYRATPMTPALFAAMAREMLPLLHAERGDITASFPYFINKSAPVSGVQSLLDYEMQWIARAVGEQVEFELVAQVPVTSLCPCSKAISEYGAHNQRSHVTVSAIVDGDFRMDELIRLVEDEASCELWGLLKRPDEKYVTERAYDNPKFVEDLVRDVAARLKAHPGIGRFRVEAENFESIHNHSAYAVVEG</sequence>
<keyword id="KW-0378">Hydrolase</keyword>
<keyword id="KW-1185">Reference proteome</keyword>
<evidence type="ECO:0000255" key="1">
    <source>
        <dbReference type="HAMAP-Rule" id="MF_01527"/>
    </source>
</evidence>
<feature type="chain" id="PRO_0000147705" description="GTP cyclohydrolase FolE2">
    <location>
        <begin position="1"/>
        <end position="265"/>
    </location>
</feature>
<feature type="site" description="May be catalytically important" evidence="1">
    <location>
        <position position="156"/>
    </location>
</feature>
<gene>
    <name evidence="1" type="primary">folE2</name>
    <name type="ordered locus">BP2797</name>
</gene>
<protein>
    <recommendedName>
        <fullName evidence="1">GTP cyclohydrolase FolE2</fullName>
        <ecNumber evidence="1">3.5.4.16</ecNumber>
    </recommendedName>
</protein>